<comment type="subcellular location">
    <subcellularLocation>
        <location evidence="1">Secreted</location>
    </subcellularLocation>
</comment>
<comment type="similarity">
    <text evidence="3">Belongs to the DEFL family.</text>
</comment>
<comment type="caution">
    <text evidence="3">Contains 8 disulfide bonds instead of the 4 disulfide bonds, which are conserved features of the family.</text>
</comment>
<keyword id="KW-0929">Antimicrobial</keyword>
<keyword id="KW-1015">Disulfide bond</keyword>
<keyword id="KW-0295">Fungicide</keyword>
<keyword id="KW-0611">Plant defense</keyword>
<keyword id="KW-1185">Reference proteome</keyword>
<keyword id="KW-0964">Secreted</keyword>
<keyword id="KW-0732">Signal</keyword>
<evidence type="ECO:0000250" key="1"/>
<evidence type="ECO:0000255" key="2"/>
<evidence type="ECO:0000305" key="3"/>
<protein>
    <recommendedName>
        <fullName>Defensin-like protein 183</fullName>
    </recommendedName>
    <alternativeName>
        <fullName>Low-molecular-weight cysteine-rich protein 19</fullName>
        <shortName>Protein LCR19</shortName>
    </alternativeName>
</protein>
<proteinExistence type="evidence at transcript level"/>
<feature type="signal peptide" evidence="2">
    <location>
        <begin position="1"/>
        <end position="26"/>
    </location>
</feature>
<feature type="chain" id="PRO_0000017260" description="Defensin-like protein 183">
    <location>
        <begin position="27"/>
        <end position="126"/>
    </location>
</feature>
<feature type="disulfide bond" evidence="1">
    <location>
        <begin position="29"/>
        <end position="68"/>
    </location>
</feature>
<feature type="disulfide bond" evidence="1">
    <location>
        <begin position="36"/>
        <end position="55"/>
    </location>
</feature>
<feature type="disulfide bond" evidence="1">
    <location>
        <begin position="39"/>
        <end position="62"/>
    </location>
</feature>
<feature type="disulfide bond" evidence="1">
    <location>
        <begin position="43"/>
        <end position="64"/>
    </location>
</feature>
<feature type="disulfide bond" evidence="1">
    <location>
        <begin position="80"/>
        <end position="126"/>
    </location>
</feature>
<feature type="disulfide bond" evidence="1">
    <location>
        <begin position="91"/>
        <end position="111"/>
    </location>
</feature>
<feature type="disulfide bond" evidence="1">
    <location>
        <begin position="96"/>
        <end position="120"/>
    </location>
</feature>
<feature type="disulfide bond" evidence="1">
    <location>
        <begin position="100"/>
        <end position="122"/>
    </location>
</feature>
<gene>
    <name type="primary">LCR19</name>
    <name type="ordered locus">At4g30074</name>
    <name type="ORF">F6G3</name>
</gene>
<accession>P82733</accession>
<accession>Q4VNZ2</accession>
<dbReference type="EMBL" id="AL078464">
    <property type="status" value="NOT_ANNOTATED_CDS"/>
    <property type="molecule type" value="Genomic_DNA"/>
</dbReference>
<dbReference type="EMBL" id="AL161576">
    <property type="status" value="NOT_ANNOTATED_CDS"/>
    <property type="molecule type" value="Genomic_DNA"/>
</dbReference>
<dbReference type="EMBL" id="CP002687">
    <property type="protein sequence ID" value="AEE85717.1"/>
    <property type="molecule type" value="Genomic_DNA"/>
</dbReference>
<dbReference type="EMBL" id="DQ108803">
    <property type="status" value="NOT_ANNOTATED_CDS"/>
    <property type="molecule type" value="mRNA"/>
</dbReference>
<dbReference type="EMBL" id="AY803270">
    <property type="protein sequence ID" value="AAX39311.1"/>
    <property type="molecule type" value="mRNA"/>
</dbReference>
<dbReference type="RefSeq" id="NP_001031755.1">
    <property type="nucleotide sequence ID" value="NM_001036678.2"/>
</dbReference>
<dbReference type="STRING" id="3702.P82733"/>
<dbReference type="PaxDb" id="3702-AT4G30074.1"/>
<dbReference type="ProteomicsDB" id="224209"/>
<dbReference type="EnsemblPlants" id="AT4G30074.1">
    <property type="protein sequence ID" value="AT4G30074.1"/>
    <property type="gene ID" value="AT4G30074"/>
</dbReference>
<dbReference type="GeneID" id="3770561"/>
<dbReference type="Gramene" id="AT4G30074.1">
    <property type="protein sequence ID" value="AT4G30074.1"/>
    <property type="gene ID" value="AT4G30074"/>
</dbReference>
<dbReference type="KEGG" id="ath:AT4G30074"/>
<dbReference type="Araport" id="AT4G30074"/>
<dbReference type="TAIR" id="AT4G30074">
    <property type="gene designation" value="LCR19"/>
</dbReference>
<dbReference type="eggNOG" id="ENOG502SD1Z">
    <property type="taxonomic scope" value="Eukaryota"/>
</dbReference>
<dbReference type="HOGENOM" id="CLU_158287_1_0_1"/>
<dbReference type="InParanoid" id="P82733"/>
<dbReference type="OMA" id="NDIGTCK"/>
<dbReference type="OrthoDB" id="993238at2759"/>
<dbReference type="PhylomeDB" id="P82733"/>
<dbReference type="PRO" id="PR:P82733"/>
<dbReference type="Proteomes" id="UP000006548">
    <property type="component" value="Chromosome 4"/>
</dbReference>
<dbReference type="ExpressionAtlas" id="P82733">
    <property type="expression patterns" value="baseline"/>
</dbReference>
<dbReference type="GO" id="GO:0005576">
    <property type="term" value="C:extracellular region"/>
    <property type="evidence" value="ECO:0007669"/>
    <property type="project" value="UniProtKB-SubCell"/>
</dbReference>
<dbReference type="GO" id="GO:0050832">
    <property type="term" value="P:defense response to fungus"/>
    <property type="evidence" value="ECO:0007669"/>
    <property type="project" value="UniProtKB-KW"/>
</dbReference>
<dbReference type="GO" id="GO:0031640">
    <property type="term" value="P:killing of cells of another organism"/>
    <property type="evidence" value="ECO:0007669"/>
    <property type="project" value="UniProtKB-KW"/>
</dbReference>
<dbReference type="InterPro" id="IPR039641">
    <property type="entry name" value="LCR"/>
</dbReference>
<dbReference type="PANTHER" id="PTHR36788">
    <property type="entry name" value="DEFENSIN-LIKE PROTEIN 183"/>
    <property type="match status" value="1"/>
</dbReference>
<dbReference type="PANTHER" id="PTHR36788:SF2">
    <property type="entry name" value="DEFENSIN-LIKE PROTEIN 183"/>
    <property type="match status" value="1"/>
</dbReference>
<name>DF183_ARATH</name>
<organism evidence="3">
    <name type="scientific">Arabidopsis thaliana</name>
    <name type="common">Mouse-ear cress</name>
    <dbReference type="NCBI Taxonomy" id="3702"/>
    <lineage>
        <taxon>Eukaryota</taxon>
        <taxon>Viridiplantae</taxon>
        <taxon>Streptophyta</taxon>
        <taxon>Embryophyta</taxon>
        <taxon>Tracheophyta</taxon>
        <taxon>Spermatophyta</taxon>
        <taxon>Magnoliopsida</taxon>
        <taxon>eudicotyledons</taxon>
        <taxon>Gunneridae</taxon>
        <taxon>Pentapetalae</taxon>
        <taxon>rosids</taxon>
        <taxon>malvids</taxon>
        <taxon>Brassicales</taxon>
        <taxon>Brassicaceae</taxon>
        <taxon>Camelineae</taxon>
        <taxon>Arabidopsis</taxon>
    </lineage>
</organism>
<reference evidence="3" key="1">
    <citation type="journal article" date="1999" name="Nature">
        <title>Sequence and analysis of chromosome 4 of the plant Arabidopsis thaliana.</title>
        <authorList>
            <person name="Mayer K.F.X."/>
            <person name="Schueller C."/>
            <person name="Wambutt R."/>
            <person name="Murphy G."/>
            <person name="Volckaert G."/>
            <person name="Pohl T."/>
            <person name="Duesterhoeft A."/>
            <person name="Stiekema W."/>
            <person name="Entian K.-D."/>
            <person name="Terryn N."/>
            <person name="Harris B."/>
            <person name="Ansorge W."/>
            <person name="Brandt P."/>
            <person name="Grivell L.A."/>
            <person name="Rieger M."/>
            <person name="Weichselgartner M."/>
            <person name="de Simone V."/>
            <person name="Obermaier B."/>
            <person name="Mache R."/>
            <person name="Mueller M."/>
            <person name="Kreis M."/>
            <person name="Delseny M."/>
            <person name="Puigdomenech P."/>
            <person name="Watson M."/>
            <person name="Schmidtheini T."/>
            <person name="Reichert B."/>
            <person name="Portetelle D."/>
            <person name="Perez-Alonso M."/>
            <person name="Boutry M."/>
            <person name="Bancroft I."/>
            <person name="Vos P."/>
            <person name="Hoheisel J."/>
            <person name="Zimmermann W."/>
            <person name="Wedler H."/>
            <person name="Ridley P."/>
            <person name="Langham S.-A."/>
            <person name="McCullagh B."/>
            <person name="Bilham L."/>
            <person name="Robben J."/>
            <person name="van der Schueren J."/>
            <person name="Grymonprez B."/>
            <person name="Chuang Y.-J."/>
            <person name="Vandenbussche F."/>
            <person name="Braeken M."/>
            <person name="Weltjens I."/>
            <person name="Voet M."/>
            <person name="Bastiaens I."/>
            <person name="Aert R."/>
            <person name="Defoor E."/>
            <person name="Weitzenegger T."/>
            <person name="Bothe G."/>
            <person name="Ramsperger U."/>
            <person name="Hilbert H."/>
            <person name="Braun M."/>
            <person name="Holzer E."/>
            <person name="Brandt A."/>
            <person name="Peters S."/>
            <person name="van Staveren M."/>
            <person name="Dirkse W."/>
            <person name="Mooijman P."/>
            <person name="Klein Lankhorst R."/>
            <person name="Rose M."/>
            <person name="Hauf J."/>
            <person name="Koetter P."/>
            <person name="Berneiser S."/>
            <person name="Hempel S."/>
            <person name="Feldpausch M."/>
            <person name="Lamberth S."/>
            <person name="Van den Daele H."/>
            <person name="De Keyser A."/>
            <person name="Buysshaert C."/>
            <person name="Gielen J."/>
            <person name="Villarroel R."/>
            <person name="De Clercq R."/>
            <person name="van Montagu M."/>
            <person name="Rogers J."/>
            <person name="Cronin A."/>
            <person name="Quail M.A."/>
            <person name="Bray-Allen S."/>
            <person name="Clark L."/>
            <person name="Doggett J."/>
            <person name="Hall S."/>
            <person name="Kay M."/>
            <person name="Lennard N."/>
            <person name="McLay K."/>
            <person name="Mayes R."/>
            <person name="Pettett A."/>
            <person name="Rajandream M.A."/>
            <person name="Lyne M."/>
            <person name="Benes V."/>
            <person name="Rechmann S."/>
            <person name="Borkova D."/>
            <person name="Bloecker H."/>
            <person name="Scharfe M."/>
            <person name="Grimm M."/>
            <person name="Loehnert T.-H."/>
            <person name="Dose S."/>
            <person name="de Haan M."/>
            <person name="Maarse A.C."/>
            <person name="Schaefer M."/>
            <person name="Mueller-Auer S."/>
            <person name="Gabel C."/>
            <person name="Fuchs M."/>
            <person name="Fartmann B."/>
            <person name="Granderath K."/>
            <person name="Dauner D."/>
            <person name="Herzl A."/>
            <person name="Neumann S."/>
            <person name="Argiriou A."/>
            <person name="Vitale D."/>
            <person name="Liguori R."/>
            <person name="Piravandi E."/>
            <person name="Massenet O."/>
            <person name="Quigley F."/>
            <person name="Clabauld G."/>
            <person name="Muendlein A."/>
            <person name="Felber R."/>
            <person name="Schnabl S."/>
            <person name="Hiller R."/>
            <person name="Schmidt W."/>
            <person name="Lecharny A."/>
            <person name="Aubourg S."/>
            <person name="Chefdor F."/>
            <person name="Cooke R."/>
            <person name="Berger C."/>
            <person name="Monfort A."/>
            <person name="Casacuberta E."/>
            <person name="Gibbons T."/>
            <person name="Weber N."/>
            <person name="Vandenbol M."/>
            <person name="Bargues M."/>
            <person name="Terol J."/>
            <person name="Torres A."/>
            <person name="Perez-Perez A."/>
            <person name="Purnelle B."/>
            <person name="Bent E."/>
            <person name="Johnson S."/>
            <person name="Tacon D."/>
            <person name="Jesse T."/>
            <person name="Heijnen L."/>
            <person name="Schwarz S."/>
            <person name="Scholler P."/>
            <person name="Heber S."/>
            <person name="Francs P."/>
            <person name="Bielke C."/>
            <person name="Frishman D."/>
            <person name="Haase D."/>
            <person name="Lemcke K."/>
            <person name="Mewes H.-W."/>
            <person name="Stocker S."/>
            <person name="Zaccaria P."/>
            <person name="Bevan M."/>
            <person name="Wilson R.K."/>
            <person name="de la Bastide M."/>
            <person name="Habermann K."/>
            <person name="Parnell L."/>
            <person name="Dedhia N."/>
            <person name="Gnoj L."/>
            <person name="Schutz K."/>
            <person name="Huang E."/>
            <person name="Spiegel L."/>
            <person name="Sekhon M."/>
            <person name="Murray J."/>
            <person name="Sheet P."/>
            <person name="Cordes M."/>
            <person name="Abu-Threideh J."/>
            <person name="Stoneking T."/>
            <person name="Kalicki J."/>
            <person name="Graves T."/>
            <person name="Harmon G."/>
            <person name="Edwards J."/>
            <person name="Latreille P."/>
            <person name="Courtney L."/>
            <person name="Cloud J."/>
            <person name="Abbott A."/>
            <person name="Scott K."/>
            <person name="Johnson D."/>
            <person name="Minx P."/>
            <person name="Bentley D."/>
            <person name="Fulton B."/>
            <person name="Miller N."/>
            <person name="Greco T."/>
            <person name="Kemp K."/>
            <person name="Kramer J."/>
            <person name="Fulton L."/>
            <person name="Mardis E."/>
            <person name="Dante M."/>
            <person name="Pepin K."/>
            <person name="Hillier L.W."/>
            <person name="Nelson J."/>
            <person name="Spieth J."/>
            <person name="Ryan E."/>
            <person name="Andrews S."/>
            <person name="Geisel C."/>
            <person name="Layman D."/>
            <person name="Du H."/>
            <person name="Ali J."/>
            <person name="Berghoff A."/>
            <person name="Jones K."/>
            <person name="Drone K."/>
            <person name="Cotton M."/>
            <person name="Joshu C."/>
            <person name="Antonoiu B."/>
            <person name="Zidanic M."/>
            <person name="Strong C."/>
            <person name="Sun H."/>
            <person name="Lamar B."/>
            <person name="Yordan C."/>
            <person name="Ma P."/>
            <person name="Zhong J."/>
            <person name="Preston R."/>
            <person name="Vil D."/>
            <person name="Shekher M."/>
            <person name="Matero A."/>
            <person name="Shah R."/>
            <person name="Swaby I.K."/>
            <person name="O'Shaughnessy A."/>
            <person name="Rodriguez M."/>
            <person name="Hoffman J."/>
            <person name="Till S."/>
            <person name="Granat S."/>
            <person name="Shohdy N."/>
            <person name="Hasegawa A."/>
            <person name="Hameed A."/>
            <person name="Lodhi M."/>
            <person name="Johnson A."/>
            <person name="Chen E."/>
            <person name="Marra M.A."/>
            <person name="Martienssen R."/>
            <person name="McCombie W.R."/>
        </authorList>
    </citation>
    <scope>NUCLEOTIDE SEQUENCE [LARGE SCALE GENOMIC DNA]</scope>
    <source>
        <strain>cv. Columbia</strain>
    </source>
</reference>
<reference key="2">
    <citation type="journal article" date="2017" name="Plant J.">
        <title>Araport11: a complete reannotation of the Arabidopsis thaliana reference genome.</title>
        <authorList>
            <person name="Cheng C.Y."/>
            <person name="Krishnakumar V."/>
            <person name="Chan A.P."/>
            <person name="Thibaud-Nissen F."/>
            <person name="Schobel S."/>
            <person name="Town C.D."/>
        </authorList>
    </citation>
    <scope>GENOME REANNOTATION</scope>
    <source>
        <strain>cv. Columbia</strain>
    </source>
</reference>
<reference key="3">
    <citation type="submission" date="2005-06" db="EMBL/GenBank/DDBJ databases">
        <title>Full-length cDNA from Arabidopsis thaliana.</title>
        <authorList>
            <person name="Alexandrov N.N."/>
            <person name="Brover V.V."/>
            <person name="Troukhan M.E."/>
            <person name="Lu Y.-P."/>
            <person name="Flavell R.B."/>
            <person name="Feldmann K.A."/>
        </authorList>
    </citation>
    <scope>NUCLEOTIDE SEQUENCE [LARGE SCALE MRNA]</scope>
</reference>
<reference key="4">
    <citation type="journal article" date="2005" name="Plant Physiol.">
        <title>Genome organization of more than 300 defensin-like genes in Arabidopsis.</title>
        <authorList>
            <person name="Silverstein K.A.T."/>
            <person name="Graham M.A."/>
            <person name="Paape T.D."/>
            <person name="VandenBosch K.A."/>
        </authorList>
    </citation>
    <scope>NUCLEOTIDE SEQUENCE [MRNA] OF 39-104</scope>
    <scope>GENE FAMILY</scope>
</reference>
<reference evidence="3" key="5">
    <citation type="journal article" date="2001" name="Plant Mol. Biol.">
        <title>Two large Arabidopsis thaliana gene families are homologous to the Brassica gene superfamily that encodes pollen coat proteins and the male component of the self-incompatibility response.</title>
        <authorList>
            <person name="Vanoosthuyse V."/>
            <person name="Miege C."/>
            <person name="Dumas C."/>
            <person name="Cock J.M."/>
        </authorList>
    </citation>
    <scope>IDENTIFICATION</scope>
</reference>
<sequence>MEKALSLVVFIIFSIMLASVENKVNANTCIEGIGNCQQCDVRCKARHGPAAKGACDSKFQLCTCNYPCGQGPSPPQPKKCYGGAGICSDRCGAQCCNQNCAQKYNQGSGFCDSIGNTSLCKCQYNC</sequence>